<comment type="similarity">
    <text evidence="2">Belongs to the eukaryotic ribosomal protein eL42 family.</text>
</comment>
<organism>
    <name type="scientific">Coprinopsis cinerea (strain Okayama-7 / 130 / ATCC MYA-4618 / FGSC 9003)</name>
    <name type="common">Inky cap fungus</name>
    <name type="synonym">Hormographiella aspergillata</name>
    <dbReference type="NCBI Taxonomy" id="240176"/>
    <lineage>
        <taxon>Eukaryota</taxon>
        <taxon>Fungi</taxon>
        <taxon>Dikarya</taxon>
        <taxon>Basidiomycota</taxon>
        <taxon>Agaricomycotina</taxon>
        <taxon>Agaricomycetes</taxon>
        <taxon>Agaricomycetidae</taxon>
        <taxon>Agaricales</taxon>
        <taxon>Agaricineae</taxon>
        <taxon>Psathyrellaceae</taxon>
        <taxon>Coprinopsis</taxon>
    </lineage>
</organism>
<gene>
    <name type="primary">RPL44</name>
    <name type="synonym">RPL41</name>
    <name type="ORF">CC1G_05276</name>
</gene>
<keyword id="KW-1185">Reference proteome</keyword>
<keyword id="KW-0687">Ribonucleoprotein</keyword>
<keyword id="KW-0689">Ribosomal protein</keyword>
<evidence type="ECO:0000256" key="1">
    <source>
        <dbReference type="SAM" id="MobiDB-lite"/>
    </source>
</evidence>
<evidence type="ECO:0000305" key="2"/>
<proteinExistence type="inferred from homology"/>
<name>RL44_COPC7</name>
<reference key="1">
    <citation type="journal article" date="2010" name="Proc. Natl. Acad. Sci. U.S.A.">
        <title>Insights into evolution of multicellular fungi from the assembled chromosomes of the mushroom Coprinopsis cinerea (Coprinus cinereus).</title>
        <authorList>
            <person name="Stajich J.E."/>
            <person name="Wilke S.K."/>
            <person name="Ahren D."/>
            <person name="Au C.H."/>
            <person name="Birren B.W."/>
            <person name="Borodovsky M."/>
            <person name="Burns C."/>
            <person name="Canbaeck B."/>
            <person name="Casselton L.A."/>
            <person name="Cheng C.K."/>
            <person name="Deng J."/>
            <person name="Dietrich F.S."/>
            <person name="Fargo D.C."/>
            <person name="Farman M.L."/>
            <person name="Gathman A.C."/>
            <person name="Goldberg J."/>
            <person name="Guigo R."/>
            <person name="Hoegger P.J."/>
            <person name="Hooker J.B."/>
            <person name="Huggins A."/>
            <person name="James T.Y."/>
            <person name="Kamada T."/>
            <person name="Kilaru S."/>
            <person name="Kodira C."/>
            <person name="Kuees U."/>
            <person name="Kupfer D."/>
            <person name="Kwan H.S."/>
            <person name="Lomsadze A."/>
            <person name="Li W."/>
            <person name="Lilly W.W."/>
            <person name="Ma L.-J."/>
            <person name="Mackey A.J."/>
            <person name="Manning G."/>
            <person name="Martin F."/>
            <person name="Muraguchi H."/>
            <person name="Natvig D.O."/>
            <person name="Palmerini H."/>
            <person name="Ramesh M.A."/>
            <person name="Rehmeyer C.J."/>
            <person name="Roe B.A."/>
            <person name="Shenoy N."/>
            <person name="Stanke M."/>
            <person name="Ter-Hovhannisyan V."/>
            <person name="Tunlid A."/>
            <person name="Velagapudi R."/>
            <person name="Vision T.J."/>
            <person name="Zeng Q."/>
            <person name="Zolan M.E."/>
            <person name="Pukkila P.J."/>
        </authorList>
    </citation>
    <scope>NUCLEOTIDE SEQUENCE [LARGE SCALE GENOMIC DNA]</scope>
    <source>
        <strain>Okayama-7 / 130 / ATCC MYA-4618 / FGSC 9003</strain>
    </source>
</reference>
<sequence length="106" mass="12240">MVNIPKTRRTYCKGKTCKKHTPHKVTQYKKGKDSIFAQGKRRYDRKQSGYGGQTKPVFHKKAKTTKKVVLRLECTVCKYKMQVSLKRCKHFELGGEKKTKGAALTF</sequence>
<accession>A8PCG3</accession>
<feature type="chain" id="PRO_0000333267" description="Large ribosomal subunit protein eL42">
    <location>
        <begin position="1"/>
        <end position="106"/>
    </location>
</feature>
<feature type="region of interest" description="Disordered" evidence="1">
    <location>
        <begin position="36"/>
        <end position="56"/>
    </location>
</feature>
<protein>
    <recommendedName>
        <fullName evidence="2">Large ribosomal subunit protein eL42</fullName>
    </recommendedName>
    <alternativeName>
        <fullName>60S ribosomal protein L41</fullName>
    </alternativeName>
    <alternativeName>
        <fullName>60S ribosomal protein L44</fullName>
    </alternativeName>
</protein>
<dbReference type="EMBL" id="AACS02000011">
    <property type="protein sequence ID" value="EAU81446.2"/>
    <property type="molecule type" value="Genomic_DNA"/>
</dbReference>
<dbReference type="RefSeq" id="XP_001840390.2">
    <property type="nucleotide sequence ID" value="XM_001840338.2"/>
</dbReference>
<dbReference type="SMR" id="A8PCG3"/>
<dbReference type="FunCoup" id="A8PCG3">
    <property type="interactions" value="291"/>
</dbReference>
<dbReference type="STRING" id="240176.A8PCG3"/>
<dbReference type="GeneID" id="6017032"/>
<dbReference type="KEGG" id="cci:CC1G_05276"/>
<dbReference type="VEuPathDB" id="FungiDB:CC1G_05276"/>
<dbReference type="eggNOG" id="KOG3464">
    <property type="taxonomic scope" value="Eukaryota"/>
</dbReference>
<dbReference type="HOGENOM" id="CLU_114645_2_1_1"/>
<dbReference type="InParanoid" id="A8PCG3"/>
<dbReference type="OMA" id="CKKHTIH"/>
<dbReference type="OrthoDB" id="2967263at2759"/>
<dbReference type="Proteomes" id="UP000001861">
    <property type="component" value="Unassembled WGS sequence"/>
</dbReference>
<dbReference type="GO" id="GO:1990904">
    <property type="term" value="C:ribonucleoprotein complex"/>
    <property type="evidence" value="ECO:0007669"/>
    <property type="project" value="UniProtKB-KW"/>
</dbReference>
<dbReference type="GO" id="GO:0005840">
    <property type="term" value="C:ribosome"/>
    <property type="evidence" value="ECO:0007669"/>
    <property type="project" value="UniProtKB-KW"/>
</dbReference>
<dbReference type="GO" id="GO:0003735">
    <property type="term" value="F:structural constituent of ribosome"/>
    <property type="evidence" value="ECO:0007669"/>
    <property type="project" value="InterPro"/>
</dbReference>
<dbReference type="GO" id="GO:0006412">
    <property type="term" value="P:translation"/>
    <property type="evidence" value="ECO:0007669"/>
    <property type="project" value="InterPro"/>
</dbReference>
<dbReference type="FunFam" id="3.10.450.80:FF:000001">
    <property type="entry name" value="60S ribosomal protein L44"/>
    <property type="match status" value="1"/>
</dbReference>
<dbReference type="Gene3D" id="3.10.450.80">
    <property type="match status" value="1"/>
</dbReference>
<dbReference type="InterPro" id="IPR000552">
    <property type="entry name" value="Ribosomal_eL44"/>
</dbReference>
<dbReference type="InterPro" id="IPR053708">
    <property type="entry name" value="Ribosomal_LSU_eL42"/>
</dbReference>
<dbReference type="InterPro" id="IPR011332">
    <property type="entry name" value="Ribosomal_zn-bd"/>
</dbReference>
<dbReference type="PANTHER" id="PTHR10369">
    <property type="entry name" value="60S RIBOSOMAL PROTEIN L36A/L44"/>
    <property type="match status" value="1"/>
</dbReference>
<dbReference type="Pfam" id="PF00935">
    <property type="entry name" value="Ribosomal_L44"/>
    <property type="match status" value="1"/>
</dbReference>
<dbReference type="SUPFAM" id="SSF57829">
    <property type="entry name" value="Zn-binding ribosomal proteins"/>
    <property type="match status" value="1"/>
</dbReference>
<dbReference type="PROSITE" id="PS01172">
    <property type="entry name" value="RIBOSOMAL_L44E"/>
    <property type="match status" value="1"/>
</dbReference>